<evidence type="ECO:0000255" key="1">
    <source>
        <dbReference type="HAMAP-Rule" id="MF_00736"/>
    </source>
</evidence>
<evidence type="ECO:0000305" key="2"/>
<sequence length="140" mass="14755">MAKKEVAKIKLQIPAGAANPSPPVGPALGQHGLNIMGFCKEFNARTQDQKGMIIPVVITVYADRSFTFITKTPPASVLIMKAAKIEKGSGEPNRNKVGSLTMAQVEEIAKLKLPDLNAAGLESAIKSIAGTARSMGIDVK</sequence>
<organism>
    <name type="scientific">Desulfovibrio desulfuricans (strain ATCC 27774 / DSM 6949 / MB)</name>
    <dbReference type="NCBI Taxonomy" id="525146"/>
    <lineage>
        <taxon>Bacteria</taxon>
        <taxon>Pseudomonadati</taxon>
        <taxon>Thermodesulfobacteriota</taxon>
        <taxon>Desulfovibrionia</taxon>
        <taxon>Desulfovibrionales</taxon>
        <taxon>Desulfovibrionaceae</taxon>
        <taxon>Desulfovibrio</taxon>
    </lineage>
</organism>
<reference key="1">
    <citation type="submission" date="2009-01" db="EMBL/GenBank/DDBJ databases">
        <title>Complete sequence of Desulfovibrio desulfuricans subsp. desulfuricans str. ATCC 27774.</title>
        <authorList>
            <consortium name="US DOE Joint Genome Institute"/>
            <person name="Lucas S."/>
            <person name="Copeland A."/>
            <person name="Lapidus A."/>
            <person name="Glavina del Rio T."/>
            <person name="Tice H."/>
            <person name="Bruce D."/>
            <person name="Goodwin L."/>
            <person name="Pitluck S."/>
            <person name="Sims D."/>
            <person name="Lu M."/>
            <person name="Kiss H."/>
            <person name="Meineke L."/>
            <person name="Brettin T."/>
            <person name="Detter J.C."/>
            <person name="Han C."/>
            <person name="Larimer F."/>
            <person name="Land M."/>
            <person name="Hauser L."/>
            <person name="Kyrpides N."/>
            <person name="Ovchinnikova G."/>
            <person name="Hazen T.C."/>
        </authorList>
    </citation>
    <scope>NUCLEOTIDE SEQUENCE [LARGE SCALE GENOMIC DNA]</scope>
    <source>
        <strain>ATCC 27774 / DSM 6949 / MB</strain>
    </source>
</reference>
<gene>
    <name evidence="1" type="primary">rplK</name>
    <name type="ordered locus">Ddes_1632</name>
</gene>
<proteinExistence type="inferred from homology"/>
<feature type="chain" id="PRO_1000195621" description="Large ribosomal subunit protein uL11">
    <location>
        <begin position="1"/>
        <end position="140"/>
    </location>
</feature>
<accession>B8J1A4</accession>
<dbReference type="EMBL" id="CP001358">
    <property type="protein sequence ID" value="ACL49531.1"/>
    <property type="molecule type" value="Genomic_DNA"/>
</dbReference>
<dbReference type="SMR" id="B8J1A4"/>
<dbReference type="STRING" id="525146.Ddes_1632"/>
<dbReference type="KEGG" id="dds:Ddes_1632"/>
<dbReference type="eggNOG" id="COG0080">
    <property type="taxonomic scope" value="Bacteria"/>
</dbReference>
<dbReference type="HOGENOM" id="CLU_074237_2_1_7"/>
<dbReference type="GO" id="GO:0022625">
    <property type="term" value="C:cytosolic large ribosomal subunit"/>
    <property type="evidence" value="ECO:0007669"/>
    <property type="project" value="TreeGrafter"/>
</dbReference>
<dbReference type="GO" id="GO:0070180">
    <property type="term" value="F:large ribosomal subunit rRNA binding"/>
    <property type="evidence" value="ECO:0007669"/>
    <property type="project" value="UniProtKB-UniRule"/>
</dbReference>
<dbReference type="GO" id="GO:0003735">
    <property type="term" value="F:structural constituent of ribosome"/>
    <property type="evidence" value="ECO:0007669"/>
    <property type="project" value="InterPro"/>
</dbReference>
<dbReference type="GO" id="GO:0006412">
    <property type="term" value="P:translation"/>
    <property type="evidence" value="ECO:0007669"/>
    <property type="project" value="UniProtKB-UniRule"/>
</dbReference>
<dbReference type="CDD" id="cd00349">
    <property type="entry name" value="Ribosomal_L11"/>
    <property type="match status" value="1"/>
</dbReference>
<dbReference type="FunFam" id="1.10.10.250:FF:000001">
    <property type="entry name" value="50S ribosomal protein L11"/>
    <property type="match status" value="1"/>
</dbReference>
<dbReference type="FunFam" id="3.30.1550.10:FF:000001">
    <property type="entry name" value="50S ribosomal protein L11"/>
    <property type="match status" value="1"/>
</dbReference>
<dbReference type="Gene3D" id="1.10.10.250">
    <property type="entry name" value="Ribosomal protein L11, C-terminal domain"/>
    <property type="match status" value="1"/>
</dbReference>
<dbReference type="Gene3D" id="3.30.1550.10">
    <property type="entry name" value="Ribosomal protein L11/L12, N-terminal domain"/>
    <property type="match status" value="1"/>
</dbReference>
<dbReference type="HAMAP" id="MF_00736">
    <property type="entry name" value="Ribosomal_uL11"/>
    <property type="match status" value="1"/>
</dbReference>
<dbReference type="InterPro" id="IPR000911">
    <property type="entry name" value="Ribosomal_uL11"/>
</dbReference>
<dbReference type="InterPro" id="IPR006519">
    <property type="entry name" value="Ribosomal_uL11_bac-typ"/>
</dbReference>
<dbReference type="InterPro" id="IPR020783">
    <property type="entry name" value="Ribosomal_uL11_C"/>
</dbReference>
<dbReference type="InterPro" id="IPR036769">
    <property type="entry name" value="Ribosomal_uL11_C_sf"/>
</dbReference>
<dbReference type="InterPro" id="IPR020784">
    <property type="entry name" value="Ribosomal_uL11_N"/>
</dbReference>
<dbReference type="InterPro" id="IPR036796">
    <property type="entry name" value="Ribosomal_uL11_N_sf"/>
</dbReference>
<dbReference type="NCBIfam" id="TIGR01632">
    <property type="entry name" value="L11_bact"/>
    <property type="match status" value="1"/>
</dbReference>
<dbReference type="PANTHER" id="PTHR11661">
    <property type="entry name" value="60S RIBOSOMAL PROTEIN L12"/>
    <property type="match status" value="1"/>
</dbReference>
<dbReference type="PANTHER" id="PTHR11661:SF1">
    <property type="entry name" value="LARGE RIBOSOMAL SUBUNIT PROTEIN UL11M"/>
    <property type="match status" value="1"/>
</dbReference>
<dbReference type="Pfam" id="PF00298">
    <property type="entry name" value="Ribosomal_L11"/>
    <property type="match status" value="1"/>
</dbReference>
<dbReference type="Pfam" id="PF03946">
    <property type="entry name" value="Ribosomal_L11_N"/>
    <property type="match status" value="1"/>
</dbReference>
<dbReference type="SMART" id="SM00649">
    <property type="entry name" value="RL11"/>
    <property type="match status" value="1"/>
</dbReference>
<dbReference type="SUPFAM" id="SSF54747">
    <property type="entry name" value="Ribosomal L11/L12e N-terminal domain"/>
    <property type="match status" value="1"/>
</dbReference>
<dbReference type="SUPFAM" id="SSF46906">
    <property type="entry name" value="Ribosomal protein L11, C-terminal domain"/>
    <property type="match status" value="1"/>
</dbReference>
<keyword id="KW-0488">Methylation</keyword>
<keyword id="KW-0687">Ribonucleoprotein</keyword>
<keyword id="KW-0689">Ribosomal protein</keyword>
<keyword id="KW-0694">RNA-binding</keyword>
<keyword id="KW-0699">rRNA-binding</keyword>
<comment type="function">
    <text evidence="1">Forms part of the ribosomal stalk which helps the ribosome interact with GTP-bound translation factors.</text>
</comment>
<comment type="subunit">
    <text evidence="1">Part of the ribosomal stalk of the 50S ribosomal subunit. Interacts with L10 and the large rRNA to form the base of the stalk. L10 forms an elongated spine to which L12 dimers bind in a sequential fashion forming a multimeric L10(L12)X complex.</text>
</comment>
<comment type="PTM">
    <text evidence="1">One or more lysine residues are methylated.</text>
</comment>
<comment type="similarity">
    <text evidence="1">Belongs to the universal ribosomal protein uL11 family.</text>
</comment>
<name>RL11_DESDA</name>
<protein>
    <recommendedName>
        <fullName evidence="1">Large ribosomal subunit protein uL11</fullName>
    </recommendedName>
    <alternativeName>
        <fullName evidence="2">50S ribosomal protein L11</fullName>
    </alternativeName>
</protein>